<gene>
    <name type="primary">SNW1</name>
    <name type="synonym">SKIIP</name>
</gene>
<evidence type="ECO:0000250" key="1"/>
<evidence type="ECO:0000250" key="2">
    <source>
        <dbReference type="UniProtKB" id="Q13573"/>
    </source>
</evidence>
<evidence type="ECO:0000250" key="3">
    <source>
        <dbReference type="UniProtKB" id="Q9CSN1"/>
    </source>
</evidence>
<evidence type="ECO:0000256" key="4">
    <source>
        <dbReference type="SAM" id="MobiDB-lite"/>
    </source>
</evidence>
<evidence type="ECO:0000305" key="5"/>
<keyword id="KW-0007">Acetylation</keyword>
<keyword id="KW-1017">Isopeptide bond</keyword>
<keyword id="KW-0507">mRNA processing</keyword>
<keyword id="KW-0508">mRNA splicing</keyword>
<keyword id="KW-0539">Nucleus</keyword>
<keyword id="KW-0597">Phosphoprotein</keyword>
<keyword id="KW-1185">Reference proteome</keyword>
<keyword id="KW-0747">Spliceosome</keyword>
<keyword id="KW-0804">Transcription</keyword>
<keyword id="KW-0805">Transcription regulation</keyword>
<keyword id="KW-0832">Ubl conjugation</keyword>
<accession>Q1JQE0</accession>
<proteinExistence type="evidence at transcript level"/>
<protein>
    <recommendedName>
        <fullName>SNW domain-containing protein 1</fullName>
    </recommendedName>
    <alternativeName>
        <fullName>Nuclear protein SkiP</fullName>
    </alternativeName>
    <alternativeName>
        <fullName>Ski-interacting protein</fullName>
    </alternativeName>
</protein>
<organism>
    <name type="scientific">Bos taurus</name>
    <name type="common">Bovine</name>
    <dbReference type="NCBI Taxonomy" id="9913"/>
    <lineage>
        <taxon>Eukaryota</taxon>
        <taxon>Metazoa</taxon>
        <taxon>Chordata</taxon>
        <taxon>Craniata</taxon>
        <taxon>Vertebrata</taxon>
        <taxon>Euteleostomi</taxon>
        <taxon>Mammalia</taxon>
        <taxon>Eutheria</taxon>
        <taxon>Laurasiatheria</taxon>
        <taxon>Artiodactyla</taxon>
        <taxon>Ruminantia</taxon>
        <taxon>Pecora</taxon>
        <taxon>Bovidae</taxon>
        <taxon>Bovinae</taxon>
        <taxon>Bos</taxon>
    </lineage>
</organism>
<reference key="1">
    <citation type="submission" date="2006-05" db="EMBL/GenBank/DDBJ databases">
        <authorList>
            <consortium name="NIH - Mammalian Gene Collection (MGC) project"/>
        </authorList>
    </citation>
    <scope>NUCLEOTIDE SEQUENCE [LARGE SCALE MRNA]</scope>
    <source>
        <strain>Hereford</strain>
        <tissue>Ascending colon</tissue>
    </source>
</reference>
<feature type="initiator methionine" description="Removed" evidence="2">
    <location>
        <position position="1"/>
    </location>
</feature>
<feature type="chain" id="PRO_0000312490" description="SNW domain-containing protein 1">
    <location>
        <begin position="2"/>
        <end position="536"/>
    </location>
</feature>
<feature type="region of interest" description="Disordered" evidence="4">
    <location>
        <begin position="1"/>
        <end position="46"/>
    </location>
</feature>
<feature type="region of interest" description="Interaction with PPIL1" evidence="1">
    <location>
        <begin position="59"/>
        <end position="79"/>
    </location>
</feature>
<feature type="region of interest" description="SNW">
    <location>
        <begin position="174"/>
        <end position="339"/>
    </location>
</feature>
<feature type="region of interest" description="Disordered" evidence="4">
    <location>
        <begin position="209"/>
        <end position="233"/>
    </location>
</feature>
<feature type="region of interest" description="Disordered" evidence="4">
    <location>
        <begin position="311"/>
        <end position="386"/>
    </location>
</feature>
<feature type="region of interest" description="Disordered" evidence="4">
    <location>
        <begin position="472"/>
        <end position="536"/>
    </location>
</feature>
<feature type="compositionally biased region" description="Basic and acidic residues" evidence="4">
    <location>
        <begin position="472"/>
        <end position="489"/>
    </location>
</feature>
<feature type="compositionally biased region" description="Basic and acidic residues" evidence="4">
    <location>
        <begin position="503"/>
        <end position="530"/>
    </location>
</feature>
<feature type="modified residue" description="N-acetylalanine" evidence="2">
    <location>
        <position position="2"/>
    </location>
</feature>
<feature type="modified residue" description="Phosphoserine" evidence="2">
    <location>
        <position position="14"/>
    </location>
</feature>
<feature type="modified residue" description="Phosphoserine" evidence="2">
    <location>
        <position position="182"/>
    </location>
</feature>
<feature type="modified residue" description="Phosphoserine" evidence="2">
    <location>
        <position position="190"/>
    </location>
</feature>
<feature type="modified residue" description="Phosphoserine" evidence="2">
    <location>
        <position position="224"/>
    </location>
</feature>
<feature type="modified residue" description="Phosphoserine" evidence="2">
    <location>
        <position position="232"/>
    </location>
</feature>
<feature type="modified residue" description="Phosphoserine" evidence="2">
    <location>
        <position position="234"/>
    </location>
</feature>
<feature type="modified residue" description="Phosphoserine" evidence="2">
    <location>
        <position position="479"/>
    </location>
</feature>
<feature type="modified residue" description="Phosphoserine" evidence="2">
    <location>
        <position position="481"/>
    </location>
</feature>
<feature type="cross-link" description="Glycyl lysine isopeptide (Lys-Gly) (interchain with G-Cter in SUMO2)" evidence="2">
    <location>
        <position position="23"/>
    </location>
</feature>
<feature type="cross-link" description="Glycyl lysine isopeptide (Lys-Gly) (interchain with G-Cter in SUMO2)" evidence="2">
    <location>
        <position position="81"/>
    </location>
</feature>
<feature type="cross-link" description="Glycyl lysine isopeptide (Lys-Gly) (interchain with G-Cter in SUMO2)" evidence="2">
    <location>
        <position position="97"/>
    </location>
</feature>
<feature type="cross-link" description="Glycyl lysine isopeptide (Lys-Gly) (interchain with G-Cter in SUMO2)" evidence="2">
    <location>
        <position position="115"/>
    </location>
</feature>
<feature type="cross-link" description="Glycyl lysine isopeptide (Lys-Gly) (interchain with G-Cter in SUMO2)" evidence="2">
    <location>
        <position position="122"/>
    </location>
</feature>
<feature type="cross-link" description="Glycyl lysine isopeptide (Lys-Gly) (interchain with G-Cter in SUMO2)" evidence="2">
    <location>
        <position position="141"/>
    </location>
</feature>
<feature type="cross-link" description="Glycyl lysine isopeptide (Lys-Gly) (interchain with G-Cter in SUMO2)" evidence="2">
    <location>
        <position position="158"/>
    </location>
</feature>
<feature type="cross-link" description="Glycyl lysine isopeptide (Lys-Gly) (interchain with G-Cter in SUMO2)" evidence="2">
    <location>
        <position position="170"/>
    </location>
</feature>
<feature type="cross-link" description="Glycyl lysine isopeptide (Lys-Gly) (interchain with G-Cter in SUMO2)" evidence="2">
    <location>
        <position position="193"/>
    </location>
</feature>
<feature type="cross-link" description="Glycyl lysine isopeptide (Lys-Gly) (interchain with G-Cter in SUMO2)" evidence="2">
    <location>
        <position position="240"/>
    </location>
</feature>
<feature type="cross-link" description="Glycyl lysine isopeptide (Lys-Gly) (interchain with G-Cter in SUMO2)" evidence="2">
    <location>
        <position position="258"/>
    </location>
</feature>
<feature type="cross-link" description="Glycyl lysine isopeptide (Lys-Gly) (interchain with G-Cter in SUMO2)" evidence="2">
    <location>
        <position position="286"/>
    </location>
</feature>
<feature type="cross-link" description="Glycyl lysine isopeptide (Lys-Gly) (interchain with G-Cter in SUMO2)" evidence="2">
    <location>
        <position position="339"/>
    </location>
</feature>
<feature type="cross-link" description="Glycyl lysine isopeptide (Lys-Gly) (interchain with G-Cter in SUMO2)" evidence="2">
    <location>
        <position position="344"/>
    </location>
</feature>
<feature type="cross-link" description="Glycyl lysine isopeptide (Lys-Gly) (interchain with G-Cter in SUMO2)" evidence="2">
    <location>
        <position position="416"/>
    </location>
</feature>
<feature type="cross-link" description="Glycyl lysine isopeptide (Lys-Gly) (interchain with G-Cter in SUMO2)" evidence="2">
    <location>
        <position position="441"/>
    </location>
</feature>
<feature type="cross-link" description="Glycyl lysine isopeptide (Lys-Gly) (interchain with G-Cter in SUMO2)" evidence="2">
    <location>
        <position position="452"/>
    </location>
</feature>
<feature type="cross-link" description="Glycyl lysine isopeptide (Lys-Gly) (interchain with G-Cter in SUMO2)" evidence="2">
    <location>
        <position position="509"/>
    </location>
</feature>
<comment type="function">
    <text evidence="2">Involved in pre-mRNA splicing as component of the spliceosome. As a component of the minor spliceosome, involved in the splicing of U12-type introns in pre-mRNAs (By similarity). Required in the specific splicing of CDKN1A pre-mRNA; the function probably involves the recruitment of U2AF2 to the mRNA. May recruit PPIL1 to the spliceosome. May be involved in cyclin-D1/CCND1 mRNA stability through the SNARP complex which associates with both the 3'end of the CCND1 gene and its mRNA. Involved in transcriptional regulation. Modulates TGF-beta-mediated transcription via association with SMAD proteins, MYOD1-mediated transcription via association with PABPN1, RB1-mediated transcriptional repression, and retinoid-X receptor (RXR)- and vitamin D receptor (VDR)-dependent gene transcription in a cell line-specific manner probably involving coactivators NCOA1 and GRIP1. Is involved in NOTCH1-mediated transcriptional activation. Binds to multimerized forms of Notch intracellular domain (NICD) and is proposed to recruit transcriptional coactivators such as MAML1 to form an intermediate preactivation complex which associates with DNA-bound CBF-1/RBPJ to form a transcriptional activation complex by releasing SNW1 and redundant NOTCH1 NICD.</text>
</comment>
<comment type="subunit">
    <text evidence="2 3">Identified in the spliceosome C complex. Associates with U4/U6-U5 tri-small nuclear ribonucleoproteins (U4/U6-U5 tri-snRNPs). Component of the minor spliceosome, which splices U12-type introns (By similarity). Interacts with SKI, SMAD2,SMAD3, RBPJ, RB1, PABPN1, MAGEA1, SIRT1, FOXN3, U2AF2, PPIL1, DAXX and ATP1B4. Interacts with VDR and RXRA; preferentially associates with VDR:RXRA heterodimers. Interacts with NCOR2. Interacts with MAML1. Interacts with NOTCH1 NICD; the interaction involves multimerized NOTCH1 NICD. Forms a complex with NOTCH1 NICD and MAML1; the association is dissociated by RBPJ. Associates with positive transcription elongation factor b (P-TEFb). Component of the SNARP complex which consists at least of SNIP1, SNW1, THRAP3, BCLAF1 and PNN.</text>
</comment>
<comment type="subcellular location">
    <subcellularLocation>
        <location evidence="2">Nucleus</location>
    </subcellularLocation>
</comment>
<comment type="similarity">
    <text evidence="5">Belongs to the SNW family.</text>
</comment>
<sequence>MALTSFLPAPTQLSQDQLEAEEKARSQRSRQTSLVSSRREPPPYGYRKGWIPRLLEDFGDGGAFPEIHVAQYPLDMGRKKKMSNALAIQVDAEGKIKYDAIARQGQSKDKVIYSKYTDLVPKEVMNADDPDLQRPDEEAIKEITEKTRVALEKSVSQKVAAAMPVRAADKLAPAQYIRYTPSQQGVAFNSGAKQRVIRMVEMQKDPMEPPRFKINKKIPRGPPSPPAPVMHSPSRKMTVKEQQEWKIPPCISNWKNAKGYTIPLDKRLAADGRGLQTVHINENFAKLAEALYIADRKAREAVEMRAQVERKMAQKEKEKHEEKLREMAQKARERRAGIKTHVEKEDGEARERDEIRHDRRKERQHDRNLSRAAPDKRSKLQRNENRDISEVIALGVPNPRTSNEVQYDQRLFNQSKGMDSGFAGGEDEIYNVYDQAWRGGKDMAQNIYRPSKNLDKDMYGDDLEARIKTNRFVPDKEFSGSDRRQRGREGPVQFEEDPFGLDKFLEEAKQHGGSKRPSDSSRPKEHEHEGKKRRKE</sequence>
<dbReference type="EMBL" id="BC116009">
    <property type="protein sequence ID" value="AAI16010.1"/>
    <property type="molecule type" value="mRNA"/>
</dbReference>
<dbReference type="RefSeq" id="NP_001071302.1">
    <property type="nucleotide sequence ID" value="NM_001077834.1"/>
</dbReference>
<dbReference type="SMR" id="Q1JQE0"/>
<dbReference type="FunCoup" id="Q1JQE0">
    <property type="interactions" value="4178"/>
</dbReference>
<dbReference type="STRING" id="9913.ENSBTAP00000010697"/>
<dbReference type="PaxDb" id="9913-ENSBTAP00000010697"/>
<dbReference type="Ensembl" id="ENSBTAT00000010697.7">
    <property type="protein sequence ID" value="ENSBTAP00000010697.5"/>
    <property type="gene ID" value="ENSBTAG00000008136.7"/>
</dbReference>
<dbReference type="GeneID" id="326578"/>
<dbReference type="KEGG" id="bta:326578"/>
<dbReference type="CTD" id="22938"/>
<dbReference type="VEuPathDB" id="HostDB:ENSBTAG00000008136"/>
<dbReference type="VGNC" id="VGNC:35089">
    <property type="gene designation" value="SNW1"/>
</dbReference>
<dbReference type="eggNOG" id="KOG2441">
    <property type="taxonomic scope" value="Eukaryota"/>
</dbReference>
<dbReference type="GeneTree" id="ENSGT00390000010423"/>
<dbReference type="HOGENOM" id="CLU_006601_2_2_1"/>
<dbReference type="InParanoid" id="Q1JQE0"/>
<dbReference type="OMA" id="YGQRRGW"/>
<dbReference type="OrthoDB" id="666364at2759"/>
<dbReference type="TreeFam" id="TF300782"/>
<dbReference type="Reactome" id="R-BTA-2173795">
    <property type="pathway name" value="Downregulation of SMAD2/3:SMAD4 transcriptional activity"/>
</dbReference>
<dbReference type="Reactome" id="R-BTA-350054">
    <property type="pathway name" value="Notch-HLH transcription pathway"/>
</dbReference>
<dbReference type="Reactome" id="R-BTA-72163">
    <property type="pathway name" value="mRNA Splicing - Major Pathway"/>
</dbReference>
<dbReference type="Reactome" id="R-BTA-8941856">
    <property type="pathway name" value="RUNX3 regulates NOTCH signaling"/>
</dbReference>
<dbReference type="Proteomes" id="UP000009136">
    <property type="component" value="Chromosome 10"/>
</dbReference>
<dbReference type="Bgee" id="ENSBTAG00000008136">
    <property type="expression patterns" value="Expressed in oviduct epithelium and 107 other cell types or tissues"/>
</dbReference>
<dbReference type="GO" id="GO:0008024">
    <property type="term" value="C:cyclin/CDK positive transcription elongation factor complex"/>
    <property type="evidence" value="ECO:0007669"/>
    <property type="project" value="Ensembl"/>
</dbReference>
<dbReference type="GO" id="GO:0016363">
    <property type="term" value="C:nuclear matrix"/>
    <property type="evidence" value="ECO:0000250"/>
    <property type="project" value="UniProtKB"/>
</dbReference>
<dbReference type="GO" id="GO:0016607">
    <property type="term" value="C:nuclear speck"/>
    <property type="evidence" value="ECO:0007669"/>
    <property type="project" value="Ensembl"/>
</dbReference>
<dbReference type="GO" id="GO:0005634">
    <property type="term" value="C:nucleus"/>
    <property type="evidence" value="ECO:0000250"/>
    <property type="project" value="UniProtKB"/>
</dbReference>
<dbReference type="GO" id="GO:0071007">
    <property type="term" value="C:U2-type catalytic step 2 spliceosome"/>
    <property type="evidence" value="ECO:0000250"/>
    <property type="project" value="UniProtKB"/>
</dbReference>
<dbReference type="GO" id="GO:0019899">
    <property type="term" value="F:enzyme binding"/>
    <property type="evidence" value="ECO:0007669"/>
    <property type="project" value="Ensembl"/>
</dbReference>
<dbReference type="GO" id="GO:0005112">
    <property type="term" value="F:Notch binding"/>
    <property type="evidence" value="ECO:0007669"/>
    <property type="project" value="Ensembl"/>
</dbReference>
<dbReference type="GO" id="GO:0050681">
    <property type="term" value="F:nuclear androgen receptor binding"/>
    <property type="evidence" value="ECO:0007669"/>
    <property type="project" value="Ensembl"/>
</dbReference>
<dbReference type="GO" id="GO:0016922">
    <property type="term" value="F:nuclear receptor binding"/>
    <property type="evidence" value="ECO:0000250"/>
    <property type="project" value="UniProtKB"/>
</dbReference>
<dbReference type="GO" id="GO:0042974">
    <property type="term" value="F:nuclear retinoic acid receptor binding"/>
    <property type="evidence" value="ECO:0000250"/>
    <property type="project" value="UniProtKB"/>
</dbReference>
<dbReference type="GO" id="GO:0042809">
    <property type="term" value="F:nuclear vitamin D receptor binding"/>
    <property type="evidence" value="ECO:0000250"/>
    <property type="project" value="UniProtKB"/>
</dbReference>
<dbReference type="GO" id="GO:0046332">
    <property type="term" value="F:SMAD binding"/>
    <property type="evidence" value="ECO:0000250"/>
    <property type="project" value="UniProtKB"/>
</dbReference>
<dbReference type="GO" id="GO:0003713">
    <property type="term" value="F:transcription coactivator activity"/>
    <property type="evidence" value="ECO:0000250"/>
    <property type="project" value="UniProtKB"/>
</dbReference>
<dbReference type="GO" id="GO:0003714">
    <property type="term" value="F:transcription corepressor activity"/>
    <property type="evidence" value="ECO:0000250"/>
    <property type="project" value="UniProtKB"/>
</dbReference>
<dbReference type="GO" id="GO:0071300">
    <property type="term" value="P:cellular response to retinoic acid"/>
    <property type="evidence" value="ECO:0007669"/>
    <property type="project" value="Ensembl"/>
</dbReference>
<dbReference type="GO" id="GO:0042771">
    <property type="term" value="P:intrinsic apoptotic signaling pathway in response to DNA damage by p53 class mediator"/>
    <property type="evidence" value="ECO:0000250"/>
    <property type="project" value="UniProtKB"/>
</dbReference>
<dbReference type="GO" id="GO:0000398">
    <property type="term" value="P:mRNA splicing, via spliceosome"/>
    <property type="evidence" value="ECO:0000250"/>
    <property type="project" value="UniProtKB"/>
</dbReference>
<dbReference type="GO" id="GO:0000122">
    <property type="term" value="P:negative regulation of transcription by RNA polymerase II"/>
    <property type="evidence" value="ECO:0000250"/>
    <property type="project" value="UniProtKB"/>
</dbReference>
<dbReference type="GO" id="GO:0043923">
    <property type="term" value="P:positive regulation by host of viral transcription"/>
    <property type="evidence" value="ECO:0007669"/>
    <property type="project" value="Ensembl"/>
</dbReference>
<dbReference type="GO" id="GO:0048026">
    <property type="term" value="P:positive regulation of mRNA splicing, via spliceosome"/>
    <property type="evidence" value="ECO:0000250"/>
    <property type="project" value="UniProtKB"/>
</dbReference>
<dbReference type="GO" id="GO:0050769">
    <property type="term" value="P:positive regulation of neurogenesis"/>
    <property type="evidence" value="ECO:0000250"/>
    <property type="project" value="UniProtKB"/>
</dbReference>
<dbReference type="GO" id="GO:0045944">
    <property type="term" value="P:positive regulation of transcription by RNA polymerase II"/>
    <property type="evidence" value="ECO:0000250"/>
    <property type="project" value="UniProtKB"/>
</dbReference>
<dbReference type="GO" id="GO:0030511">
    <property type="term" value="P:positive regulation of transforming growth factor beta receptor signaling pathway"/>
    <property type="evidence" value="ECO:0000250"/>
    <property type="project" value="UniProtKB"/>
</dbReference>
<dbReference type="GO" id="GO:0070564">
    <property type="term" value="P:positive regulation of vitamin D receptor signaling pathway"/>
    <property type="evidence" value="ECO:0007669"/>
    <property type="project" value="Ensembl"/>
</dbReference>
<dbReference type="GO" id="GO:0048385">
    <property type="term" value="P:regulation of retinoic acid receptor signaling pathway"/>
    <property type="evidence" value="ECO:0000250"/>
    <property type="project" value="UniProtKB"/>
</dbReference>
<dbReference type="GO" id="GO:0070562">
    <property type="term" value="P:regulation of vitamin D receptor signaling pathway"/>
    <property type="evidence" value="ECO:0000250"/>
    <property type="project" value="UniProtKB"/>
</dbReference>
<dbReference type="GO" id="GO:0048384">
    <property type="term" value="P:retinoic acid receptor signaling pathway"/>
    <property type="evidence" value="ECO:0000250"/>
    <property type="project" value="UniProtKB"/>
</dbReference>
<dbReference type="InterPro" id="IPR017862">
    <property type="entry name" value="SKI-int_prot_SKIP"/>
</dbReference>
<dbReference type="InterPro" id="IPR004015">
    <property type="entry name" value="SKI-int_prot_SKIP_SNW-dom"/>
</dbReference>
<dbReference type="PANTHER" id="PTHR12096">
    <property type="entry name" value="NUCLEAR PROTEIN SKIP-RELATED"/>
    <property type="match status" value="1"/>
</dbReference>
<dbReference type="Pfam" id="PF02731">
    <property type="entry name" value="SKIP_SNW"/>
    <property type="match status" value="1"/>
</dbReference>
<name>SNW1_BOVIN</name>